<reference key="1">
    <citation type="submission" date="2006-08" db="EMBL/GenBank/DDBJ databases">
        <title>Complete sequence of Shewanella sp. MR-4.</title>
        <authorList>
            <consortium name="US DOE Joint Genome Institute"/>
            <person name="Copeland A."/>
            <person name="Lucas S."/>
            <person name="Lapidus A."/>
            <person name="Barry K."/>
            <person name="Detter J.C."/>
            <person name="Glavina del Rio T."/>
            <person name="Hammon N."/>
            <person name="Israni S."/>
            <person name="Dalin E."/>
            <person name="Tice H."/>
            <person name="Pitluck S."/>
            <person name="Kiss H."/>
            <person name="Brettin T."/>
            <person name="Bruce D."/>
            <person name="Han C."/>
            <person name="Tapia R."/>
            <person name="Gilna P."/>
            <person name="Schmutz J."/>
            <person name="Larimer F."/>
            <person name="Land M."/>
            <person name="Hauser L."/>
            <person name="Kyrpides N."/>
            <person name="Mikhailova N."/>
            <person name="Nealson K."/>
            <person name="Konstantinidis K."/>
            <person name="Klappenbach J."/>
            <person name="Tiedje J."/>
            <person name="Richardson P."/>
        </authorList>
    </citation>
    <scope>NUCLEOTIDE SEQUENCE [LARGE SCALE GENOMIC DNA]</scope>
    <source>
        <strain>MR-4</strain>
    </source>
</reference>
<dbReference type="EC" id="2.7.4.22" evidence="1"/>
<dbReference type="EMBL" id="CP000446">
    <property type="protein sequence ID" value="ABI39710.1"/>
    <property type="molecule type" value="Genomic_DNA"/>
</dbReference>
<dbReference type="RefSeq" id="WP_011623391.1">
    <property type="nucleotide sequence ID" value="NC_008321.1"/>
</dbReference>
<dbReference type="SMR" id="Q0HGV7"/>
<dbReference type="KEGG" id="she:Shewmr4_2639"/>
<dbReference type="HOGENOM" id="CLU_033861_0_0_6"/>
<dbReference type="UniPathway" id="UPA00159">
    <property type="reaction ID" value="UER00275"/>
</dbReference>
<dbReference type="GO" id="GO:0005829">
    <property type="term" value="C:cytosol"/>
    <property type="evidence" value="ECO:0007669"/>
    <property type="project" value="TreeGrafter"/>
</dbReference>
<dbReference type="GO" id="GO:0005524">
    <property type="term" value="F:ATP binding"/>
    <property type="evidence" value="ECO:0007669"/>
    <property type="project" value="UniProtKB-KW"/>
</dbReference>
<dbReference type="GO" id="GO:0033862">
    <property type="term" value="F:UMP kinase activity"/>
    <property type="evidence" value="ECO:0007669"/>
    <property type="project" value="UniProtKB-EC"/>
</dbReference>
<dbReference type="GO" id="GO:0044210">
    <property type="term" value="P:'de novo' CTP biosynthetic process"/>
    <property type="evidence" value="ECO:0007669"/>
    <property type="project" value="UniProtKB-UniRule"/>
</dbReference>
<dbReference type="GO" id="GO:0006225">
    <property type="term" value="P:UDP biosynthetic process"/>
    <property type="evidence" value="ECO:0007669"/>
    <property type="project" value="TreeGrafter"/>
</dbReference>
<dbReference type="CDD" id="cd04254">
    <property type="entry name" value="AAK_UMPK-PyrH-Ec"/>
    <property type="match status" value="1"/>
</dbReference>
<dbReference type="FunFam" id="3.40.1160.10:FF:000001">
    <property type="entry name" value="Uridylate kinase"/>
    <property type="match status" value="1"/>
</dbReference>
<dbReference type="Gene3D" id="3.40.1160.10">
    <property type="entry name" value="Acetylglutamate kinase-like"/>
    <property type="match status" value="1"/>
</dbReference>
<dbReference type="HAMAP" id="MF_01220_B">
    <property type="entry name" value="PyrH_B"/>
    <property type="match status" value="1"/>
</dbReference>
<dbReference type="InterPro" id="IPR036393">
    <property type="entry name" value="AceGlu_kinase-like_sf"/>
</dbReference>
<dbReference type="InterPro" id="IPR001048">
    <property type="entry name" value="Asp/Glu/Uridylate_kinase"/>
</dbReference>
<dbReference type="InterPro" id="IPR011817">
    <property type="entry name" value="Uridylate_kinase"/>
</dbReference>
<dbReference type="InterPro" id="IPR015963">
    <property type="entry name" value="Uridylate_kinase_bac"/>
</dbReference>
<dbReference type="NCBIfam" id="TIGR02075">
    <property type="entry name" value="pyrH_bact"/>
    <property type="match status" value="1"/>
</dbReference>
<dbReference type="PANTHER" id="PTHR42833">
    <property type="entry name" value="URIDYLATE KINASE"/>
    <property type="match status" value="1"/>
</dbReference>
<dbReference type="PANTHER" id="PTHR42833:SF4">
    <property type="entry name" value="URIDYLATE KINASE PUMPKIN, CHLOROPLASTIC"/>
    <property type="match status" value="1"/>
</dbReference>
<dbReference type="Pfam" id="PF00696">
    <property type="entry name" value="AA_kinase"/>
    <property type="match status" value="1"/>
</dbReference>
<dbReference type="PIRSF" id="PIRSF005650">
    <property type="entry name" value="Uridylate_kin"/>
    <property type="match status" value="1"/>
</dbReference>
<dbReference type="SUPFAM" id="SSF53633">
    <property type="entry name" value="Carbamate kinase-like"/>
    <property type="match status" value="1"/>
</dbReference>
<accession>Q0HGV7</accession>
<comment type="function">
    <text evidence="1">Catalyzes the reversible phosphorylation of UMP to UDP.</text>
</comment>
<comment type="catalytic activity">
    <reaction evidence="1">
        <text>UMP + ATP = UDP + ADP</text>
        <dbReference type="Rhea" id="RHEA:24400"/>
        <dbReference type="ChEBI" id="CHEBI:30616"/>
        <dbReference type="ChEBI" id="CHEBI:57865"/>
        <dbReference type="ChEBI" id="CHEBI:58223"/>
        <dbReference type="ChEBI" id="CHEBI:456216"/>
        <dbReference type="EC" id="2.7.4.22"/>
    </reaction>
</comment>
<comment type="activity regulation">
    <text evidence="1">Allosterically activated by GTP. Inhibited by UTP.</text>
</comment>
<comment type="pathway">
    <text evidence="1">Pyrimidine metabolism; CTP biosynthesis via de novo pathway; UDP from UMP (UMPK route): step 1/1.</text>
</comment>
<comment type="subunit">
    <text evidence="1">Homohexamer.</text>
</comment>
<comment type="subcellular location">
    <subcellularLocation>
        <location evidence="1">Cytoplasm</location>
    </subcellularLocation>
</comment>
<comment type="similarity">
    <text evidence="1">Belongs to the UMP kinase family.</text>
</comment>
<protein>
    <recommendedName>
        <fullName evidence="1">Uridylate kinase</fullName>
        <shortName evidence="1">UK</shortName>
        <ecNumber evidence="1">2.7.4.22</ecNumber>
    </recommendedName>
    <alternativeName>
        <fullName evidence="1">Uridine monophosphate kinase</fullName>
        <shortName evidence="1">UMP kinase</shortName>
        <shortName evidence="1">UMPK</shortName>
    </alternativeName>
</protein>
<sequence>MSTNPKPAFRRILLKLSGEALMGDEGFGIDPKVLDRMAQEVKELVELGIQVGVVIGGGNLFRGEGLAKAGMNRVVGDHMGMLATVMNGLAMRDALHRAYVNARLMSAIPLKGVCDDYNWAEAISLLKSGRVVIFAAGTGNPFCTTDSAACLRGIEIEAEVVLKGTKVDGVYSDDPMKNPEAVKYDELSYTEVLDKELKVMDLAAFTMARDHDMPILVFNMNKPGALRRVVMGEEEGTMIRAK</sequence>
<keyword id="KW-0021">Allosteric enzyme</keyword>
<keyword id="KW-0067">ATP-binding</keyword>
<keyword id="KW-0963">Cytoplasm</keyword>
<keyword id="KW-0418">Kinase</keyword>
<keyword id="KW-0547">Nucleotide-binding</keyword>
<keyword id="KW-0665">Pyrimidine biosynthesis</keyword>
<keyword id="KW-0808">Transferase</keyword>
<name>PYRH_SHESM</name>
<feature type="chain" id="PRO_1000054013" description="Uridylate kinase">
    <location>
        <begin position="1"/>
        <end position="242"/>
    </location>
</feature>
<feature type="region of interest" description="Involved in allosteric activation by GTP" evidence="1">
    <location>
        <begin position="23"/>
        <end position="28"/>
    </location>
</feature>
<feature type="binding site" evidence="1">
    <location>
        <begin position="15"/>
        <end position="18"/>
    </location>
    <ligand>
        <name>ATP</name>
        <dbReference type="ChEBI" id="CHEBI:30616"/>
    </ligand>
</feature>
<feature type="binding site" evidence="1">
    <location>
        <position position="57"/>
    </location>
    <ligand>
        <name>UMP</name>
        <dbReference type="ChEBI" id="CHEBI:57865"/>
    </ligand>
</feature>
<feature type="binding site" evidence="1">
    <location>
        <position position="58"/>
    </location>
    <ligand>
        <name>ATP</name>
        <dbReference type="ChEBI" id="CHEBI:30616"/>
    </ligand>
</feature>
<feature type="binding site" evidence="1">
    <location>
        <position position="62"/>
    </location>
    <ligand>
        <name>ATP</name>
        <dbReference type="ChEBI" id="CHEBI:30616"/>
    </ligand>
</feature>
<feature type="binding site" evidence="1">
    <location>
        <position position="77"/>
    </location>
    <ligand>
        <name>UMP</name>
        <dbReference type="ChEBI" id="CHEBI:57865"/>
    </ligand>
</feature>
<feature type="binding site" evidence="1">
    <location>
        <begin position="138"/>
        <end position="145"/>
    </location>
    <ligand>
        <name>UMP</name>
        <dbReference type="ChEBI" id="CHEBI:57865"/>
    </ligand>
</feature>
<feature type="binding site" evidence="1">
    <location>
        <position position="165"/>
    </location>
    <ligand>
        <name>ATP</name>
        <dbReference type="ChEBI" id="CHEBI:30616"/>
    </ligand>
</feature>
<feature type="binding site" evidence="1">
    <location>
        <position position="171"/>
    </location>
    <ligand>
        <name>ATP</name>
        <dbReference type="ChEBI" id="CHEBI:30616"/>
    </ligand>
</feature>
<feature type="binding site" evidence="1">
    <location>
        <position position="174"/>
    </location>
    <ligand>
        <name>ATP</name>
        <dbReference type="ChEBI" id="CHEBI:30616"/>
    </ligand>
</feature>
<gene>
    <name evidence="1" type="primary">pyrH</name>
    <name type="ordered locus">Shewmr4_2639</name>
</gene>
<evidence type="ECO:0000255" key="1">
    <source>
        <dbReference type="HAMAP-Rule" id="MF_01220"/>
    </source>
</evidence>
<organism>
    <name type="scientific">Shewanella sp. (strain MR-4)</name>
    <dbReference type="NCBI Taxonomy" id="60480"/>
    <lineage>
        <taxon>Bacteria</taxon>
        <taxon>Pseudomonadati</taxon>
        <taxon>Pseudomonadota</taxon>
        <taxon>Gammaproteobacteria</taxon>
        <taxon>Alteromonadales</taxon>
        <taxon>Shewanellaceae</taxon>
        <taxon>Shewanella</taxon>
    </lineage>
</organism>
<proteinExistence type="inferred from homology"/>